<reference key="1">
    <citation type="journal article" date="2004" name="Proc. Natl. Acad. Sci. U.S.A.">
        <title>Structural flexibility in the Burkholderia mallei genome.</title>
        <authorList>
            <person name="Nierman W.C."/>
            <person name="DeShazer D."/>
            <person name="Kim H.S."/>
            <person name="Tettelin H."/>
            <person name="Nelson K.E."/>
            <person name="Feldblyum T.V."/>
            <person name="Ulrich R.L."/>
            <person name="Ronning C.M."/>
            <person name="Brinkac L.M."/>
            <person name="Daugherty S.C."/>
            <person name="Davidsen T.D."/>
            <person name="DeBoy R.T."/>
            <person name="Dimitrov G."/>
            <person name="Dodson R.J."/>
            <person name="Durkin A.S."/>
            <person name="Gwinn M.L."/>
            <person name="Haft D.H."/>
            <person name="Khouri H.M."/>
            <person name="Kolonay J.F."/>
            <person name="Madupu R."/>
            <person name="Mohammoud Y."/>
            <person name="Nelson W.C."/>
            <person name="Radune D."/>
            <person name="Romero C.M."/>
            <person name="Sarria S."/>
            <person name="Selengut J."/>
            <person name="Shamblin C."/>
            <person name="Sullivan S.A."/>
            <person name="White O."/>
            <person name="Yu Y."/>
            <person name="Zafar N."/>
            <person name="Zhou L."/>
            <person name="Fraser C.M."/>
        </authorList>
    </citation>
    <scope>NUCLEOTIDE SEQUENCE [LARGE SCALE GENOMIC DNA]</scope>
    <source>
        <strain>ATCC 23344</strain>
    </source>
</reference>
<dbReference type="EMBL" id="CP000010">
    <property type="protein sequence ID" value="AAU49451.1"/>
    <property type="molecule type" value="Genomic_DNA"/>
</dbReference>
<dbReference type="RefSeq" id="WP_004185607.1">
    <property type="nucleotide sequence ID" value="NC_006348.1"/>
</dbReference>
<dbReference type="RefSeq" id="YP_103480.1">
    <property type="nucleotide sequence ID" value="NC_006348.1"/>
</dbReference>
<dbReference type="SMR" id="Q62IJ0"/>
<dbReference type="KEGG" id="bma:BMA1884"/>
<dbReference type="PATRIC" id="fig|243160.12.peg.1926"/>
<dbReference type="eggNOG" id="COG0217">
    <property type="taxonomic scope" value="Bacteria"/>
</dbReference>
<dbReference type="HOGENOM" id="CLU_062974_2_2_4"/>
<dbReference type="Proteomes" id="UP000006693">
    <property type="component" value="Chromosome 1"/>
</dbReference>
<dbReference type="GO" id="GO:0005829">
    <property type="term" value="C:cytosol"/>
    <property type="evidence" value="ECO:0007669"/>
    <property type="project" value="TreeGrafter"/>
</dbReference>
<dbReference type="GO" id="GO:0003677">
    <property type="term" value="F:DNA binding"/>
    <property type="evidence" value="ECO:0007669"/>
    <property type="project" value="UniProtKB-UniRule"/>
</dbReference>
<dbReference type="GO" id="GO:0006355">
    <property type="term" value="P:regulation of DNA-templated transcription"/>
    <property type="evidence" value="ECO:0007669"/>
    <property type="project" value="UniProtKB-UniRule"/>
</dbReference>
<dbReference type="FunFam" id="1.10.10.200:FF:000001">
    <property type="entry name" value="Probable transcriptional regulatory protein YebC"/>
    <property type="match status" value="1"/>
</dbReference>
<dbReference type="FunFam" id="3.30.70.980:FF:000002">
    <property type="entry name" value="Probable transcriptional regulatory protein YebC"/>
    <property type="match status" value="1"/>
</dbReference>
<dbReference type="Gene3D" id="1.10.10.200">
    <property type="match status" value="1"/>
</dbReference>
<dbReference type="Gene3D" id="3.30.70.980">
    <property type="match status" value="2"/>
</dbReference>
<dbReference type="HAMAP" id="MF_00693">
    <property type="entry name" value="Transcrip_reg_TACO1"/>
    <property type="match status" value="1"/>
</dbReference>
<dbReference type="InterPro" id="IPR017856">
    <property type="entry name" value="Integrase-like_N"/>
</dbReference>
<dbReference type="InterPro" id="IPR048300">
    <property type="entry name" value="TACO1_YebC-like_2nd/3rd_dom"/>
</dbReference>
<dbReference type="InterPro" id="IPR049083">
    <property type="entry name" value="TACO1_YebC_N"/>
</dbReference>
<dbReference type="InterPro" id="IPR002876">
    <property type="entry name" value="Transcrip_reg_TACO1-like"/>
</dbReference>
<dbReference type="InterPro" id="IPR026564">
    <property type="entry name" value="Transcrip_reg_TACO1-like_dom3"/>
</dbReference>
<dbReference type="InterPro" id="IPR029072">
    <property type="entry name" value="YebC-like"/>
</dbReference>
<dbReference type="NCBIfam" id="NF001030">
    <property type="entry name" value="PRK00110.1"/>
    <property type="match status" value="1"/>
</dbReference>
<dbReference type="NCBIfam" id="NF009044">
    <property type="entry name" value="PRK12378.1"/>
    <property type="match status" value="1"/>
</dbReference>
<dbReference type="NCBIfam" id="TIGR01033">
    <property type="entry name" value="YebC/PmpR family DNA-binding transcriptional regulator"/>
    <property type="match status" value="1"/>
</dbReference>
<dbReference type="PANTHER" id="PTHR12532:SF6">
    <property type="entry name" value="TRANSCRIPTIONAL REGULATORY PROTEIN YEBC-RELATED"/>
    <property type="match status" value="1"/>
</dbReference>
<dbReference type="PANTHER" id="PTHR12532">
    <property type="entry name" value="TRANSLATIONAL ACTIVATOR OF CYTOCHROME C OXIDASE 1"/>
    <property type="match status" value="1"/>
</dbReference>
<dbReference type="Pfam" id="PF20772">
    <property type="entry name" value="TACO1_YebC_N"/>
    <property type="match status" value="1"/>
</dbReference>
<dbReference type="Pfam" id="PF01709">
    <property type="entry name" value="Transcrip_reg"/>
    <property type="match status" value="1"/>
</dbReference>
<dbReference type="SUPFAM" id="SSF75625">
    <property type="entry name" value="YebC-like"/>
    <property type="match status" value="1"/>
</dbReference>
<name>Y1884_BURMA</name>
<feature type="chain" id="PRO_0000175777" description="Probable transcriptional regulatory protein BMA1884">
    <location>
        <begin position="1"/>
        <end position="242"/>
    </location>
</feature>
<evidence type="ECO:0000255" key="1">
    <source>
        <dbReference type="HAMAP-Rule" id="MF_00693"/>
    </source>
</evidence>
<gene>
    <name type="ordered locus">BMA1884</name>
</gene>
<sequence>MAGHSKWANIKHKKAAADAKRGKIWTRLIKEIQVAARLGGGDVNSNPRLRLAVDKAADANMPKDNVKRAIDRGVGGADGANYEEIRYEGYGIGGAAIIVDTLTDNRTRTVAEVRHAFSKFGGNMGTDGSVAFMFDHVGQFLFAPGTSEDALMEAALEAGANDVNTNDDGSIEVLCDWQEFSKVKDALEAAGFKAELAEVTMKPQNEVDFTGEDAVKMQKLLDALENLDDVQEVYTNAVVVEE</sequence>
<keyword id="KW-0963">Cytoplasm</keyword>
<keyword id="KW-0238">DNA-binding</keyword>
<keyword id="KW-1185">Reference proteome</keyword>
<keyword id="KW-0804">Transcription</keyword>
<keyword id="KW-0805">Transcription regulation</keyword>
<organism>
    <name type="scientific">Burkholderia mallei (strain ATCC 23344)</name>
    <dbReference type="NCBI Taxonomy" id="243160"/>
    <lineage>
        <taxon>Bacteria</taxon>
        <taxon>Pseudomonadati</taxon>
        <taxon>Pseudomonadota</taxon>
        <taxon>Betaproteobacteria</taxon>
        <taxon>Burkholderiales</taxon>
        <taxon>Burkholderiaceae</taxon>
        <taxon>Burkholderia</taxon>
        <taxon>pseudomallei group</taxon>
    </lineage>
</organism>
<accession>Q62IJ0</accession>
<comment type="subcellular location">
    <subcellularLocation>
        <location evidence="1">Cytoplasm</location>
    </subcellularLocation>
</comment>
<comment type="similarity">
    <text evidence="1">Belongs to the TACO1 family.</text>
</comment>
<protein>
    <recommendedName>
        <fullName evidence="1">Probable transcriptional regulatory protein BMA1884</fullName>
    </recommendedName>
</protein>
<proteinExistence type="inferred from homology"/>